<proteinExistence type="inferred from homology"/>
<sequence length="339" mass="38599">MEDSIDLQRESLNKLIPESGSDDTSSSDEVNGLPTSSDGADDVSLINSEDLNSSLLKSDPGGTNKSDQTKNDETDSNDDQRIVLSGGVELEEVQETVKVYNNVKQALLEVETTDESQLILDKIKRDSQYSSDTECESRDADSELEDIQLEFRSKYPQLQIPYSDELCVKIIPYLDIVYDILSGVVTSMYYTRAKRAAMDSKKAFLSAEDFRNLDINLFTAGYFGLRRQLKVGNIIYEKFRDELARSKSPKIQWWGPIDFANYVLAPEVLVSFVLDTCQNKRSVQLTSRQDVYELFDNTTYYGNTVTDNEPLESWELSRKKRKYGPTNNQKTHKTRKKKS</sequence>
<comment type="function">
    <text evidence="1">May be involved in a process influencing telomere capping.</text>
</comment>
<comment type="subcellular location">
    <subcellularLocation>
        <location evidence="1">Cytoplasm</location>
    </subcellularLocation>
    <subcellularLocation>
        <location evidence="1">Nucleus</location>
    </subcellularLocation>
</comment>
<comment type="similarity">
    <text evidence="3">Belongs to the RTC4 family.</text>
</comment>
<keyword id="KW-0963">Cytoplasm</keyword>
<keyword id="KW-0539">Nucleus</keyword>
<keyword id="KW-1185">Reference proteome</keyword>
<protein>
    <recommendedName>
        <fullName>Restriction of telomere capping protein 4</fullName>
    </recommendedName>
</protein>
<gene>
    <name type="primary">RTC4</name>
    <name type="ordered locus">CAGL0J07876g</name>
</gene>
<organism>
    <name type="scientific">Candida glabrata (strain ATCC 2001 / BCRC 20586 / JCM 3761 / NBRC 0622 / NRRL Y-65 / CBS 138)</name>
    <name type="common">Yeast</name>
    <name type="synonym">Nakaseomyces glabratus</name>
    <dbReference type="NCBI Taxonomy" id="284593"/>
    <lineage>
        <taxon>Eukaryota</taxon>
        <taxon>Fungi</taxon>
        <taxon>Dikarya</taxon>
        <taxon>Ascomycota</taxon>
        <taxon>Saccharomycotina</taxon>
        <taxon>Saccharomycetes</taxon>
        <taxon>Saccharomycetales</taxon>
        <taxon>Saccharomycetaceae</taxon>
        <taxon>Nakaseomyces</taxon>
    </lineage>
</organism>
<evidence type="ECO:0000250" key="1"/>
<evidence type="ECO:0000256" key="2">
    <source>
        <dbReference type="SAM" id="MobiDB-lite"/>
    </source>
</evidence>
<evidence type="ECO:0000305" key="3"/>
<dbReference type="EMBL" id="CR380956">
    <property type="protein sequence ID" value="CAG61001.1"/>
    <property type="molecule type" value="Genomic_DNA"/>
</dbReference>
<dbReference type="RefSeq" id="XP_448050.1">
    <property type="nucleotide sequence ID" value="XM_448050.1"/>
</dbReference>
<dbReference type="SMR" id="Q6FNZ4"/>
<dbReference type="FunCoup" id="Q6FNZ4">
    <property type="interactions" value="28"/>
</dbReference>
<dbReference type="STRING" id="284593.Q6FNZ4"/>
<dbReference type="EnsemblFungi" id="CAGL0J07876g-T">
    <property type="protein sequence ID" value="CAGL0J07876g-T-p1"/>
    <property type="gene ID" value="CAGL0J07876g"/>
</dbReference>
<dbReference type="KEGG" id="cgr:2889857"/>
<dbReference type="CGD" id="CAL0133756">
    <property type="gene designation" value="CAGL0J07876g"/>
</dbReference>
<dbReference type="VEuPathDB" id="FungiDB:CAGL0J07876g"/>
<dbReference type="eggNOG" id="ENOG502S1RG">
    <property type="taxonomic scope" value="Eukaryota"/>
</dbReference>
<dbReference type="HOGENOM" id="CLU_818877_0_0_1"/>
<dbReference type="InParanoid" id="Q6FNZ4"/>
<dbReference type="OMA" id="WESHIRT"/>
<dbReference type="Proteomes" id="UP000002428">
    <property type="component" value="Chromosome J"/>
</dbReference>
<dbReference type="GO" id="GO:0005737">
    <property type="term" value="C:cytoplasm"/>
    <property type="evidence" value="ECO:0007669"/>
    <property type="project" value="UniProtKB-SubCell"/>
</dbReference>
<dbReference type="GO" id="GO:0005634">
    <property type="term" value="C:nucleus"/>
    <property type="evidence" value="ECO:0007669"/>
    <property type="project" value="UniProtKB-SubCell"/>
</dbReference>
<dbReference type="InterPro" id="IPR039024">
    <property type="entry name" value="RTC4"/>
</dbReference>
<dbReference type="InterPro" id="IPR028094">
    <property type="entry name" value="RTC4_C"/>
</dbReference>
<dbReference type="PANTHER" id="PTHR41391">
    <property type="entry name" value="RESTRICTION OF TELOMERE CAPPING PROTEIN 4"/>
    <property type="match status" value="1"/>
</dbReference>
<dbReference type="PANTHER" id="PTHR41391:SF1">
    <property type="entry name" value="RESTRICTION OF TELOMERE CAPPING PROTEIN 4"/>
    <property type="match status" value="1"/>
</dbReference>
<dbReference type="Pfam" id="PF14474">
    <property type="entry name" value="RTC4"/>
    <property type="match status" value="1"/>
</dbReference>
<dbReference type="SMART" id="SM01312">
    <property type="entry name" value="RTC4"/>
    <property type="match status" value="1"/>
</dbReference>
<reference key="1">
    <citation type="journal article" date="2004" name="Nature">
        <title>Genome evolution in yeasts.</title>
        <authorList>
            <person name="Dujon B."/>
            <person name="Sherman D."/>
            <person name="Fischer G."/>
            <person name="Durrens P."/>
            <person name="Casaregola S."/>
            <person name="Lafontaine I."/>
            <person name="de Montigny J."/>
            <person name="Marck C."/>
            <person name="Neuveglise C."/>
            <person name="Talla E."/>
            <person name="Goffard N."/>
            <person name="Frangeul L."/>
            <person name="Aigle M."/>
            <person name="Anthouard V."/>
            <person name="Babour A."/>
            <person name="Barbe V."/>
            <person name="Barnay S."/>
            <person name="Blanchin S."/>
            <person name="Beckerich J.-M."/>
            <person name="Beyne E."/>
            <person name="Bleykasten C."/>
            <person name="Boisrame A."/>
            <person name="Boyer J."/>
            <person name="Cattolico L."/>
            <person name="Confanioleri F."/>
            <person name="de Daruvar A."/>
            <person name="Despons L."/>
            <person name="Fabre E."/>
            <person name="Fairhead C."/>
            <person name="Ferry-Dumazet H."/>
            <person name="Groppi A."/>
            <person name="Hantraye F."/>
            <person name="Hennequin C."/>
            <person name="Jauniaux N."/>
            <person name="Joyet P."/>
            <person name="Kachouri R."/>
            <person name="Kerrest A."/>
            <person name="Koszul R."/>
            <person name="Lemaire M."/>
            <person name="Lesur I."/>
            <person name="Ma L."/>
            <person name="Muller H."/>
            <person name="Nicaud J.-M."/>
            <person name="Nikolski M."/>
            <person name="Oztas S."/>
            <person name="Ozier-Kalogeropoulos O."/>
            <person name="Pellenz S."/>
            <person name="Potier S."/>
            <person name="Richard G.-F."/>
            <person name="Straub M.-L."/>
            <person name="Suleau A."/>
            <person name="Swennen D."/>
            <person name="Tekaia F."/>
            <person name="Wesolowski-Louvel M."/>
            <person name="Westhof E."/>
            <person name="Wirth B."/>
            <person name="Zeniou-Meyer M."/>
            <person name="Zivanovic Y."/>
            <person name="Bolotin-Fukuhara M."/>
            <person name="Thierry A."/>
            <person name="Bouchier C."/>
            <person name="Caudron B."/>
            <person name="Scarpelli C."/>
            <person name="Gaillardin C."/>
            <person name="Weissenbach J."/>
            <person name="Wincker P."/>
            <person name="Souciet J.-L."/>
        </authorList>
    </citation>
    <scope>NUCLEOTIDE SEQUENCE [LARGE SCALE GENOMIC DNA]</scope>
    <source>
        <strain>ATCC 2001 / BCRC 20586 / JCM 3761 / NBRC 0622 / NRRL Y-65 / CBS 138</strain>
    </source>
</reference>
<name>RTC4_CANGA</name>
<accession>Q6FNZ4</accession>
<feature type="chain" id="PRO_0000408795" description="Restriction of telomere capping protein 4">
    <location>
        <begin position="1"/>
        <end position="339"/>
    </location>
</feature>
<feature type="region of interest" description="Disordered" evidence="2">
    <location>
        <begin position="1"/>
        <end position="80"/>
    </location>
</feature>
<feature type="region of interest" description="Disordered" evidence="2">
    <location>
        <begin position="312"/>
        <end position="339"/>
    </location>
</feature>
<feature type="compositionally biased region" description="Basic and acidic residues" evidence="2">
    <location>
        <begin position="1"/>
        <end position="12"/>
    </location>
</feature>
<feature type="compositionally biased region" description="Polar residues" evidence="2">
    <location>
        <begin position="45"/>
        <end position="66"/>
    </location>
</feature>
<feature type="compositionally biased region" description="Basic and acidic residues" evidence="2">
    <location>
        <begin position="67"/>
        <end position="80"/>
    </location>
</feature>
<feature type="compositionally biased region" description="Basic residues" evidence="2">
    <location>
        <begin position="330"/>
        <end position="339"/>
    </location>
</feature>